<feature type="chain" id="PRO_0000370391" description="Ribosome biogenesis protein BOP1 homolog">
    <location>
        <begin position="1"/>
        <end position="866"/>
    </location>
</feature>
<feature type="repeat" description="WD 1">
    <location>
        <begin position="527"/>
        <end position="566"/>
    </location>
</feature>
<feature type="repeat" description="WD 2">
    <location>
        <begin position="568"/>
        <end position="608"/>
    </location>
</feature>
<feature type="repeat" description="WD 3">
    <location>
        <begin position="697"/>
        <end position="735"/>
    </location>
</feature>
<feature type="repeat" description="WD 4">
    <location>
        <begin position="738"/>
        <end position="777"/>
    </location>
</feature>
<feature type="repeat" description="WD 5">
    <location>
        <begin position="781"/>
        <end position="820"/>
    </location>
</feature>
<feature type="repeat" description="WD 6">
    <location>
        <begin position="836"/>
        <end position="866"/>
    </location>
</feature>
<feature type="region of interest" description="Disordered" evidence="2">
    <location>
        <begin position="1"/>
        <end position="180"/>
    </location>
</feature>
<feature type="region of interest" description="Disordered" evidence="2">
    <location>
        <begin position="214"/>
        <end position="241"/>
    </location>
</feature>
<feature type="compositionally biased region" description="Acidic residues" evidence="2">
    <location>
        <begin position="37"/>
        <end position="52"/>
    </location>
</feature>
<feature type="compositionally biased region" description="Acidic residues" evidence="2">
    <location>
        <begin position="60"/>
        <end position="146"/>
    </location>
</feature>
<feature type="compositionally biased region" description="Acidic residues" evidence="2">
    <location>
        <begin position="167"/>
        <end position="179"/>
    </location>
</feature>
<comment type="function">
    <text evidence="1">Required for maturation of ribosomal RNAs and formation of the large ribosomal subunit.</text>
</comment>
<comment type="subcellular location">
    <subcellularLocation>
        <location evidence="1">Nucleus</location>
        <location evidence="1">Nucleolus</location>
    </subcellularLocation>
    <subcellularLocation>
        <location evidence="1">Nucleus</location>
        <location evidence="1">Nucleoplasm</location>
    </subcellularLocation>
</comment>
<comment type="similarity">
    <text evidence="1">Belongs to the WD repeat BOP1/ERB1 family.</text>
</comment>
<sequence length="866" mass="99305">MVANKDKATKRKIPAVDDAVKVSTANGKQQTKLKEPVDDESASDYYESDEENLFASIDNGNDEDSTDSEGEGEESDDEEVQEFESADSDFEDESGKDDEEEAEDEEDDADEEDADSADDVNSDSSPEPEEEESDDELEFEEDLEEPEQPKAIQKVIVGRQKKSVEATAEDEDEEDDEETRDLLEAAQKEDEKLGEIDAALGIAPAKTRGVGIFPPEAKSRFKGGKNQDEYAAGDTSDEEDIRNTVGNIPMHWYDEYKHIGYDWEGNRLIKPAKTDAIDDFLKKMEDPNFWRTVKDPQTGQNVVLTDEDIGLIKRIMAGKNPDEQYSDYEPWIEWFTSEVEKMPIRNIPDHKRSFLPSKSEKQKVGRLVHALKMGWIKTRAETERLAALSKGPKFYMIWESDHGKEEMRRIHDHVVAPKRPLPGHAESYNPPPEYLFNEQELAEWNSHEEEPWKRKLHYVPQKFNSLREVPYYDKYIRERFLRCLDLYLCPRGKRTRVTVGPEYLIPKLPSPKDLQPFPTLQNLIYKGHTDMIRSVSIEPKGEYLVTGSDDQTVKIWEVSTARCIRTIPTGDVVRSVAWCPNSKISLIAVASGKRVLLINPQVGDSLLVKKTDDLLAEAPKSETVDNERITTAVQWVDFTEEERKSGVRIVINHFKEIKQVTWHGRGDYFATVMPEAANRSVLIHQLSKRRSQFPFSKSKGLIQCVLFHPVKPCLFVATQRHVRVYDLVKQELLKKLFPSCKWISSMAIHPKGDNLLVATYEKKMMWFDLDLSTRPYQQLKLHHSAIRNVAFHLRYPLFASASDDRSVIVSHGMVYNDLLQNPLIVPLRRLEHHERVNDFGAFDVVFHPTQPWLFSSGADNTVRLYT</sequence>
<keyword id="KW-0539">Nucleus</keyword>
<keyword id="KW-1185">Reference proteome</keyword>
<keyword id="KW-0677">Repeat</keyword>
<keyword id="KW-0690">Ribosome biogenesis</keyword>
<keyword id="KW-0698">rRNA processing</keyword>
<keyword id="KW-0853">WD repeat</keyword>
<proteinExistence type="inferred from homology"/>
<organism>
    <name type="scientific">Aedes aegypti</name>
    <name type="common">Yellowfever mosquito</name>
    <name type="synonym">Culex aegypti</name>
    <dbReference type="NCBI Taxonomy" id="7159"/>
    <lineage>
        <taxon>Eukaryota</taxon>
        <taxon>Metazoa</taxon>
        <taxon>Ecdysozoa</taxon>
        <taxon>Arthropoda</taxon>
        <taxon>Hexapoda</taxon>
        <taxon>Insecta</taxon>
        <taxon>Pterygota</taxon>
        <taxon>Neoptera</taxon>
        <taxon>Endopterygota</taxon>
        <taxon>Diptera</taxon>
        <taxon>Nematocera</taxon>
        <taxon>Culicoidea</taxon>
        <taxon>Culicidae</taxon>
        <taxon>Culicinae</taxon>
        <taxon>Aedini</taxon>
        <taxon>Aedes</taxon>
        <taxon>Stegomyia</taxon>
    </lineage>
</organism>
<evidence type="ECO:0000255" key="1">
    <source>
        <dbReference type="HAMAP-Rule" id="MF_03027"/>
    </source>
</evidence>
<evidence type="ECO:0000256" key="2">
    <source>
        <dbReference type="SAM" id="MobiDB-lite"/>
    </source>
</evidence>
<gene>
    <name type="ORF">AAEL001169</name>
</gene>
<name>BOP1_AEDAE</name>
<protein>
    <recommendedName>
        <fullName evidence="1">Ribosome biogenesis protein BOP1 homolog</fullName>
    </recommendedName>
</protein>
<reference key="1">
    <citation type="journal article" date="2007" name="Science">
        <title>Genome sequence of Aedes aegypti, a major arbovirus vector.</title>
        <authorList>
            <person name="Nene V."/>
            <person name="Wortman J.R."/>
            <person name="Lawson D."/>
            <person name="Haas B.J."/>
            <person name="Kodira C.D."/>
            <person name="Tu Z.J."/>
            <person name="Loftus B.J."/>
            <person name="Xi Z."/>
            <person name="Megy K."/>
            <person name="Grabherr M."/>
            <person name="Ren Q."/>
            <person name="Zdobnov E.M."/>
            <person name="Lobo N.F."/>
            <person name="Campbell K.S."/>
            <person name="Brown S.E."/>
            <person name="Bonaldo M.F."/>
            <person name="Zhu J."/>
            <person name="Sinkins S.P."/>
            <person name="Hogenkamp D.G."/>
            <person name="Amedeo P."/>
            <person name="Arensburger P."/>
            <person name="Atkinson P.W."/>
            <person name="Bidwell S.L."/>
            <person name="Biedler J."/>
            <person name="Birney E."/>
            <person name="Bruggner R.V."/>
            <person name="Costas J."/>
            <person name="Coy M.R."/>
            <person name="Crabtree J."/>
            <person name="Crawford M."/>
            <person name="DeBruyn B."/>
            <person name="DeCaprio D."/>
            <person name="Eiglmeier K."/>
            <person name="Eisenstadt E."/>
            <person name="El-Dorry H."/>
            <person name="Gelbart W.M."/>
            <person name="Gomes S.L."/>
            <person name="Hammond M."/>
            <person name="Hannick L.I."/>
            <person name="Hogan J.R."/>
            <person name="Holmes M.H."/>
            <person name="Jaffe D."/>
            <person name="Johnston S.J."/>
            <person name="Kennedy R.C."/>
            <person name="Koo H."/>
            <person name="Kravitz S."/>
            <person name="Kriventseva E.V."/>
            <person name="Kulp D."/>
            <person name="Labutti K."/>
            <person name="Lee E."/>
            <person name="Li S."/>
            <person name="Lovin D.D."/>
            <person name="Mao C."/>
            <person name="Mauceli E."/>
            <person name="Menck C.F."/>
            <person name="Miller J.R."/>
            <person name="Montgomery P."/>
            <person name="Mori A."/>
            <person name="Nascimento A.L."/>
            <person name="Naveira H.F."/>
            <person name="Nusbaum C."/>
            <person name="O'Leary S.B."/>
            <person name="Orvis J."/>
            <person name="Pertea M."/>
            <person name="Quesneville H."/>
            <person name="Reidenbach K.R."/>
            <person name="Rogers Y.-H.C."/>
            <person name="Roth C.W."/>
            <person name="Schneider J.R."/>
            <person name="Schatz M."/>
            <person name="Shumway M."/>
            <person name="Stanke M."/>
            <person name="Stinson E.O."/>
            <person name="Tubio J.M.C."/>
            <person name="Vanzee J.P."/>
            <person name="Verjovski-Almeida S."/>
            <person name="Werner D."/>
            <person name="White O.R."/>
            <person name="Wyder S."/>
            <person name="Zeng Q."/>
            <person name="Zhao Q."/>
            <person name="Zhao Y."/>
            <person name="Hill C.A."/>
            <person name="Raikhel A.S."/>
            <person name="Soares M.B."/>
            <person name="Knudson D.L."/>
            <person name="Lee N.H."/>
            <person name="Galagan J."/>
            <person name="Salzberg S.L."/>
            <person name="Paulsen I.T."/>
            <person name="Dimopoulos G."/>
            <person name="Collins F.H."/>
            <person name="Bruce B."/>
            <person name="Fraser-Liggett C.M."/>
            <person name="Severson D.W."/>
        </authorList>
    </citation>
    <scope>NUCLEOTIDE SEQUENCE [LARGE SCALE GENOMIC DNA]</scope>
    <source>
        <strain>LVPib12</strain>
    </source>
</reference>
<dbReference type="EMBL" id="CH477209">
    <property type="protein sequence ID" value="EAT47752.1"/>
    <property type="molecule type" value="Genomic_DNA"/>
</dbReference>
<dbReference type="RefSeq" id="XP_001658204.1">
    <property type="nucleotide sequence ID" value="XM_001658154.1"/>
</dbReference>
<dbReference type="SMR" id="Q17LZ2"/>
<dbReference type="FunCoup" id="Q17LZ2">
    <property type="interactions" value="1284"/>
</dbReference>
<dbReference type="STRING" id="7159.Q17LZ2"/>
<dbReference type="PaxDb" id="7159-AAEL001169-PA"/>
<dbReference type="GeneID" id="5568838"/>
<dbReference type="KEGG" id="aag:5568838"/>
<dbReference type="VEuPathDB" id="VectorBase:AAEL001169"/>
<dbReference type="eggNOG" id="KOG0650">
    <property type="taxonomic scope" value="Eukaryota"/>
</dbReference>
<dbReference type="HOGENOM" id="CLU_011390_1_0_1"/>
<dbReference type="InParanoid" id="Q17LZ2"/>
<dbReference type="OMA" id="MRPAKGE"/>
<dbReference type="OrthoDB" id="5571054at2759"/>
<dbReference type="PhylomeDB" id="Q17LZ2"/>
<dbReference type="Proteomes" id="UP000008820">
    <property type="component" value="Unassembled WGS sequence"/>
</dbReference>
<dbReference type="Proteomes" id="UP000682892">
    <property type="component" value="Chromosome 2"/>
</dbReference>
<dbReference type="GO" id="GO:0005654">
    <property type="term" value="C:nucleoplasm"/>
    <property type="evidence" value="ECO:0007669"/>
    <property type="project" value="UniProtKB-SubCell"/>
</dbReference>
<dbReference type="GO" id="GO:0070545">
    <property type="term" value="C:PeBoW complex"/>
    <property type="evidence" value="ECO:0007669"/>
    <property type="project" value="TreeGrafter"/>
</dbReference>
<dbReference type="GO" id="GO:0030687">
    <property type="term" value="C:preribosome, large subunit precursor"/>
    <property type="evidence" value="ECO:0007669"/>
    <property type="project" value="UniProtKB-UniRule"/>
</dbReference>
<dbReference type="GO" id="GO:0043021">
    <property type="term" value="F:ribonucleoprotein complex binding"/>
    <property type="evidence" value="ECO:0007669"/>
    <property type="project" value="UniProtKB-UniRule"/>
</dbReference>
<dbReference type="GO" id="GO:0000466">
    <property type="term" value="P:maturation of 5.8S rRNA from tricistronic rRNA transcript (SSU-rRNA, 5.8S rRNA, LSU-rRNA)"/>
    <property type="evidence" value="ECO:0007669"/>
    <property type="project" value="UniProtKB-UniRule"/>
</dbReference>
<dbReference type="GO" id="GO:0000463">
    <property type="term" value="P:maturation of LSU-rRNA from tricistronic rRNA transcript (SSU-rRNA, 5.8S rRNA, LSU-rRNA)"/>
    <property type="evidence" value="ECO:0007669"/>
    <property type="project" value="UniProtKB-UniRule"/>
</dbReference>
<dbReference type="FunFam" id="2.130.10.10:FF:000061">
    <property type="entry name" value="Ribosome biogenesis protein BOP1 homolog"/>
    <property type="match status" value="1"/>
</dbReference>
<dbReference type="Gene3D" id="2.130.10.10">
    <property type="entry name" value="YVTN repeat-like/Quinoprotein amine dehydrogenase"/>
    <property type="match status" value="1"/>
</dbReference>
<dbReference type="HAMAP" id="MF_03027">
    <property type="entry name" value="BOP1"/>
    <property type="match status" value="1"/>
</dbReference>
<dbReference type="InterPro" id="IPR028598">
    <property type="entry name" value="BOP1/Erb1"/>
</dbReference>
<dbReference type="InterPro" id="IPR012953">
    <property type="entry name" value="BOP1_N_dom"/>
</dbReference>
<dbReference type="InterPro" id="IPR015943">
    <property type="entry name" value="WD40/YVTN_repeat-like_dom_sf"/>
</dbReference>
<dbReference type="InterPro" id="IPR019775">
    <property type="entry name" value="WD40_repeat_CS"/>
</dbReference>
<dbReference type="InterPro" id="IPR036322">
    <property type="entry name" value="WD40_repeat_dom_sf"/>
</dbReference>
<dbReference type="InterPro" id="IPR001680">
    <property type="entry name" value="WD40_rpt"/>
</dbReference>
<dbReference type="PANTHER" id="PTHR17605:SF0">
    <property type="entry name" value="RIBOSOME BIOGENESIS PROTEIN BOP1"/>
    <property type="match status" value="1"/>
</dbReference>
<dbReference type="PANTHER" id="PTHR17605">
    <property type="entry name" value="RIBOSOME BIOGENESIS PROTEIN BOP1 BLOCK OF PROLIFERATION 1 PROTEIN"/>
    <property type="match status" value="1"/>
</dbReference>
<dbReference type="Pfam" id="PF08145">
    <property type="entry name" value="BOP1NT"/>
    <property type="match status" value="1"/>
</dbReference>
<dbReference type="Pfam" id="PF00400">
    <property type="entry name" value="WD40"/>
    <property type="match status" value="3"/>
</dbReference>
<dbReference type="SMART" id="SM01035">
    <property type="entry name" value="BOP1NT"/>
    <property type="match status" value="1"/>
</dbReference>
<dbReference type="SMART" id="SM00320">
    <property type="entry name" value="WD40"/>
    <property type="match status" value="6"/>
</dbReference>
<dbReference type="SUPFAM" id="SSF50978">
    <property type="entry name" value="WD40 repeat-like"/>
    <property type="match status" value="1"/>
</dbReference>
<dbReference type="PROSITE" id="PS00678">
    <property type="entry name" value="WD_REPEATS_1"/>
    <property type="match status" value="1"/>
</dbReference>
<dbReference type="PROSITE" id="PS50082">
    <property type="entry name" value="WD_REPEATS_2"/>
    <property type="match status" value="1"/>
</dbReference>
<dbReference type="PROSITE" id="PS50294">
    <property type="entry name" value="WD_REPEATS_REGION"/>
    <property type="match status" value="1"/>
</dbReference>
<accession>Q17LZ2</accession>